<dbReference type="EMBL" id="M60318">
    <property type="protein sequence ID" value="AAA35047.1"/>
    <property type="molecule type" value="Genomic_DNA"/>
</dbReference>
<dbReference type="EMBL" id="M63004">
    <property type="protein sequence ID" value="AAA35089.1"/>
    <property type="molecule type" value="Genomic_DNA"/>
</dbReference>
<dbReference type="EMBL" id="U51031">
    <property type="protein sequence ID" value="AAB64469.1"/>
    <property type="molecule type" value="Genomic_DNA"/>
</dbReference>
<dbReference type="EMBL" id="BK006938">
    <property type="protein sequence ID" value="DAA12132.1"/>
    <property type="molecule type" value="Genomic_DNA"/>
</dbReference>
<dbReference type="PIR" id="A39578">
    <property type="entry name" value="A39578"/>
</dbReference>
<dbReference type="RefSeq" id="NP_010579.1">
    <property type="nucleotide sequence ID" value="NM_001180601.1"/>
</dbReference>
<dbReference type="PDB" id="5NCL">
    <property type="method" value="X-ray"/>
    <property type="resolution" value="3.15 A"/>
    <property type="chains" value="D=205-214"/>
</dbReference>
<dbReference type="PDB" id="7AM1">
    <property type="method" value="X-ray"/>
    <property type="resolution" value="1.90 A"/>
    <property type="chains" value="A/B=339-1250"/>
</dbReference>
<dbReference type="PDBsum" id="5NCL"/>
<dbReference type="PDBsum" id="7AM1"/>
<dbReference type="SMR" id="P24276"/>
<dbReference type="BioGRID" id="32345">
    <property type="interactions" value="998"/>
</dbReference>
<dbReference type="DIP" id="DIP-6449N"/>
<dbReference type="ELM" id="P24276"/>
<dbReference type="FunCoup" id="P24276">
    <property type="interactions" value="322"/>
</dbReference>
<dbReference type="IntAct" id="P24276">
    <property type="interactions" value="43"/>
</dbReference>
<dbReference type="MINT" id="P24276"/>
<dbReference type="STRING" id="4932.YDR293C"/>
<dbReference type="iPTMnet" id="P24276"/>
<dbReference type="PaxDb" id="4932-YDR293C"/>
<dbReference type="PeptideAtlas" id="P24276"/>
<dbReference type="EnsemblFungi" id="YDR293C_mRNA">
    <property type="protein sequence ID" value="YDR293C"/>
    <property type="gene ID" value="YDR293C"/>
</dbReference>
<dbReference type="GeneID" id="851887"/>
<dbReference type="KEGG" id="sce:YDR293C"/>
<dbReference type="AGR" id="SGD:S000002701"/>
<dbReference type="SGD" id="S000002701">
    <property type="gene designation" value="SSD1"/>
</dbReference>
<dbReference type="VEuPathDB" id="FungiDB:YDR293C"/>
<dbReference type="eggNOG" id="KOG2102">
    <property type="taxonomic scope" value="Eukaryota"/>
</dbReference>
<dbReference type="GeneTree" id="ENSGT00530000063106"/>
<dbReference type="HOGENOM" id="CLU_002333_0_3_1"/>
<dbReference type="InParanoid" id="P24276"/>
<dbReference type="OMA" id="QIQATHQ"/>
<dbReference type="OrthoDB" id="372421at2759"/>
<dbReference type="BioCyc" id="YEAST:G3O-29856-MONOMER"/>
<dbReference type="BioGRID-ORCS" id="851887">
    <property type="hits" value="0 hits in 10 CRISPR screens"/>
</dbReference>
<dbReference type="PRO" id="PR:P24276"/>
<dbReference type="Proteomes" id="UP000002311">
    <property type="component" value="Chromosome IV"/>
</dbReference>
<dbReference type="RNAct" id="P24276">
    <property type="molecule type" value="protein"/>
</dbReference>
<dbReference type="GO" id="GO:0005933">
    <property type="term" value="C:cellular bud"/>
    <property type="evidence" value="ECO:0000314"/>
    <property type="project" value="SGD"/>
</dbReference>
<dbReference type="GO" id="GO:0005935">
    <property type="term" value="C:cellular bud neck"/>
    <property type="evidence" value="ECO:0000314"/>
    <property type="project" value="SGD"/>
</dbReference>
<dbReference type="GO" id="GO:0005737">
    <property type="term" value="C:cytoplasm"/>
    <property type="evidence" value="ECO:0000314"/>
    <property type="project" value="SGD"/>
</dbReference>
<dbReference type="GO" id="GO:0010494">
    <property type="term" value="C:cytoplasmic stress granule"/>
    <property type="evidence" value="ECO:0000314"/>
    <property type="project" value="SGD"/>
</dbReference>
<dbReference type="GO" id="GO:0005634">
    <property type="term" value="C:nucleus"/>
    <property type="evidence" value="ECO:0000314"/>
    <property type="project" value="SGD"/>
</dbReference>
<dbReference type="GO" id="GO:0000932">
    <property type="term" value="C:P-body"/>
    <property type="evidence" value="ECO:0000314"/>
    <property type="project" value="SGD"/>
</dbReference>
<dbReference type="GO" id="GO:0000175">
    <property type="term" value="F:3'-5'-RNA exonuclease activity"/>
    <property type="evidence" value="ECO:0000318"/>
    <property type="project" value="GO_Central"/>
</dbReference>
<dbReference type="GO" id="GO:0003730">
    <property type="term" value="F:mRNA 3'-UTR binding"/>
    <property type="evidence" value="ECO:0000314"/>
    <property type="project" value="SGD"/>
</dbReference>
<dbReference type="GO" id="GO:0048027">
    <property type="term" value="F:mRNA 5'-UTR binding"/>
    <property type="evidence" value="ECO:0000314"/>
    <property type="project" value="SGD"/>
</dbReference>
<dbReference type="GO" id="GO:0003729">
    <property type="term" value="F:mRNA binding"/>
    <property type="evidence" value="ECO:0000314"/>
    <property type="project" value="SGD"/>
</dbReference>
<dbReference type="GO" id="GO:0000900">
    <property type="term" value="F:mRNA regulatory element binding translation repressor activity"/>
    <property type="evidence" value="ECO:0000316"/>
    <property type="project" value="SGD"/>
</dbReference>
<dbReference type="GO" id="GO:0051301">
    <property type="term" value="P:cell division"/>
    <property type="evidence" value="ECO:0007669"/>
    <property type="project" value="UniProtKB-KW"/>
</dbReference>
<dbReference type="GO" id="GO:0008298">
    <property type="term" value="P:intracellular mRNA localization"/>
    <property type="evidence" value="ECO:0000314"/>
    <property type="project" value="SGD"/>
</dbReference>
<dbReference type="GO" id="GO:0006402">
    <property type="term" value="P:mRNA catabolic process"/>
    <property type="evidence" value="ECO:0000318"/>
    <property type="project" value="GO_Central"/>
</dbReference>
<dbReference type="GO" id="GO:0017148">
    <property type="term" value="P:negative regulation of translation"/>
    <property type="evidence" value="ECO:0000316"/>
    <property type="project" value="SGD"/>
</dbReference>
<dbReference type="GO" id="GO:0060237">
    <property type="term" value="P:regulation of fungal-type cell wall organization"/>
    <property type="evidence" value="ECO:0000316"/>
    <property type="project" value="SGD"/>
</dbReference>
<dbReference type="GO" id="GO:1903450">
    <property type="term" value="P:regulation of G1 to G0 transition"/>
    <property type="evidence" value="ECO:0000315"/>
    <property type="project" value="SGD"/>
</dbReference>
<dbReference type="FunFam" id="2.40.50.690:FF:000001">
    <property type="entry name" value="Cell wall biogenesis protein"/>
    <property type="match status" value="1"/>
</dbReference>
<dbReference type="FunFam" id="2.40.50.700:FF:000002">
    <property type="entry name" value="Cell wall biogenesis protein"/>
    <property type="match status" value="1"/>
</dbReference>
<dbReference type="FunFam" id="2.40.50.140:FF:000100">
    <property type="entry name" value="Cell wall biogenesis protein phosphatase"/>
    <property type="match status" value="1"/>
</dbReference>
<dbReference type="Gene3D" id="2.40.50.690">
    <property type="match status" value="1"/>
</dbReference>
<dbReference type="Gene3D" id="2.40.50.700">
    <property type="match status" value="1"/>
</dbReference>
<dbReference type="Gene3D" id="2.40.50.140">
    <property type="entry name" value="Nucleic acid-binding proteins"/>
    <property type="match status" value="1"/>
</dbReference>
<dbReference type="InterPro" id="IPR041505">
    <property type="entry name" value="Dis3_CSD2"/>
</dbReference>
<dbReference type="InterPro" id="IPR041093">
    <property type="entry name" value="Dis3l2-like_C"/>
</dbReference>
<dbReference type="InterPro" id="IPR012340">
    <property type="entry name" value="NA-bd_OB-fold"/>
</dbReference>
<dbReference type="InterPro" id="IPR001900">
    <property type="entry name" value="RNase_II/R"/>
</dbReference>
<dbReference type="InterPro" id="IPR022966">
    <property type="entry name" value="RNase_II/R_CS"/>
</dbReference>
<dbReference type="InterPro" id="IPR050180">
    <property type="entry name" value="RNR_Ribonuclease"/>
</dbReference>
<dbReference type="PANTHER" id="PTHR23355:SF9">
    <property type="entry name" value="DIS3-LIKE EXONUCLEASE 2"/>
    <property type="match status" value="1"/>
</dbReference>
<dbReference type="PANTHER" id="PTHR23355">
    <property type="entry name" value="RIBONUCLEASE"/>
    <property type="match status" value="1"/>
</dbReference>
<dbReference type="Pfam" id="PF17877">
    <property type="entry name" value="Dis3l2_C_term"/>
    <property type="match status" value="1"/>
</dbReference>
<dbReference type="Pfam" id="PF17849">
    <property type="entry name" value="OB_Dis3"/>
    <property type="match status" value="1"/>
</dbReference>
<dbReference type="Pfam" id="PF00773">
    <property type="entry name" value="RNB"/>
    <property type="match status" value="1"/>
</dbReference>
<dbReference type="SMART" id="SM00955">
    <property type="entry name" value="RNB"/>
    <property type="match status" value="1"/>
</dbReference>
<dbReference type="SUPFAM" id="SSF50249">
    <property type="entry name" value="Nucleic acid-binding proteins"/>
    <property type="match status" value="2"/>
</dbReference>
<dbReference type="PROSITE" id="PS01175">
    <property type="entry name" value="RIBONUCLEASE_II"/>
    <property type="match status" value="1"/>
</dbReference>
<protein>
    <recommendedName>
        <fullName>Protein SSD1</fullName>
    </recommendedName>
    <alternativeName>
        <fullName>Protein SRK1</fullName>
    </alternativeName>
</protein>
<gene>
    <name type="primary">SSD1</name>
    <name type="synonym">CLA1</name>
    <name type="synonym">RLD1</name>
    <name type="synonym">SRK1</name>
    <name type="ordered locus">YDR293C</name>
    <name type="ORF">D9819.4</name>
</gene>
<accession>P24276</accession>
<accession>D6VSS2</accession>
<comment type="function">
    <text>Can suppress the lethality due to deletion of SIT4, and partially the defects due to BCY1 disruption. Is implicated in the control of the cell cycle G1 phase.</text>
</comment>
<comment type="interaction">
    <interactant intactId="EBI-18153">
        <id>P24276</id>
    </interactant>
    <interactant intactId="EBI-4110">
        <id>P53894</id>
        <label>CBK1</label>
    </interactant>
    <organismsDiffer>false</organismsDiffer>
    <experiments>4</experiments>
</comment>
<comment type="interaction">
    <interactant intactId="EBI-18153">
        <id>P24276</id>
    </interactant>
    <interactant intactId="EBI-8394">
        <id>P38074</id>
        <label>HMT1</label>
    </interactant>
    <organismsDiffer>false</organismsDiffer>
    <experiments>2</experiments>
</comment>
<comment type="miscellaneous">
    <text>Several alleles of SSD1 exist in different yeast strains.</text>
</comment>
<comment type="miscellaneous">
    <text evidence="3">Present with 1100 molecules/cell in log phase SD medium.</text>
</comment>
<comment type="similarity">
    <text evidence="4">Belongs to the RNR ribonuclease family.</text>
</comment>
<reference key="1">
    <citation type="journal article" date="1991" name="Mol. Cell. Biol.">
        <title>The SIT4 protein phosphatase functions in late G1 for progression into S phase.</title>
        <authorList>
            <person name="Sutton A."/>
            <person name="Immanuel D."/>
            <person name="Arndt K.T."/>
        </authorList>
    </citation>
    <scope>NUCLEOTIDE SEQUENCE [GENOMIC DNA]</scope>
</reference>
<reference key="2">
    <citation type="journal article" date="1991" name="Mol. Cell. Biol.">
        <title>The Saccharomyces cerevisiae SRK1 gene, a suppressor of bcy1 and ins1, may be involved in protein phosphatase function.</title>
        <authorList>
            <person name="Wilson R.B."/>
            <person name="Brenner A.A."/>
            <person name="White T.B."/>
            <person name="Engler M.J."/>
            <person name="Gaughran J.P."/>
            <person name="Tatchell K."/>
        </authorList>
    </citation>
    <scope>NUCLEOTIDE SEQUENCE [GENOMIC DNA]</scope>
</reference>
<reference key="3">
    <citation type="journal article" date="1997" name="Nature">
        <title>The nucleotide sequence of Saccharomyces cerevisiae chromosome IV.</title>
        <authorList>
            <person name="Jacq C."/>
            <person name="Alt-Moerbe J."/>
            <person name="Andre B."/>
            <person name="Arnold W."/>
            <person name="Bahr A."/>
            <person name="Ballesta J.P.G."/>
            <person name="Bargues M."/>
            <person name="Baron L."/>
            <person name="Becker A."/>
            <person name="Biteau N."/>
            <person name="Bloecker H."/>
            <person name="Blugeon C."/>
            <person name="Boskovic J."/>
            <person name="Brandt P."/>
            <person name="Brueckner M."/>
            <person name="Buitrago M.J."/>
            <person name="Coster F."/>
            <person name="Delaveau T."/>
            <person name="del Rey F."/>
            <person name="Dujon B."/>
            <person name="Eide L.G."/>
            <person name="Garcia-Cantalejo J.M."/>
            <person name="Goffeau A."/>
            <person name="Gomez-Peris A."/>
            <person name="Granotier C."/>
            <person name="Hanemann V."/>
            <person name="Hankeln T."/>
            <person name="Hoheisel J.D."/>
            <person name="Jaeger W."/>
            <person name="Jimenez A."/>
            <person name="Jonniaux J.-L."/>
            <person name="Kraemer C."/>
            <person name="Kuester H."/>
            <person name="Laamanen P."/>
            <person name="Legros Y."/>
            <person name="Louis E.J."/>
            <person name="Moeller-Rieker S."/>
            <person name="Monnet A."/>
            <person name="Moro M."/>
            <person name="Mueller-Auer S."/>
            <person name="Nussbaumer B."/>
            <person name="Paricio N."/>
            <person name="Paulin L."/>
            <person name="Perea J."/>
            <person name="Perez-Alonso M."/>
            <person name="Perez-Ortin J.E."/>
            <person name="Pohl T.M."/>
            <person name="Prydz H."/>
            <person name="Purnelle B."/>
            <person name="Rasmussen S.W."/>
            <person name="Remacha M.A."/>
            <person name="Revuelta J.L."/>
            <person name="Rieger M."/>
            <person name="Salom D."/>
            <person name="Saluz H.P."/>
            <person name="Saiz J.E."/>
            <person name="Saren A.-M."/>
            <person name="Schaefer M."/>
            <person name="Scharfe M."/>
            <person name="Schmidt E.R."/>
            <person name="Schneider C."/>
            <person name="Scholler P."/>
            <person name="Schwarz S."/>
            <person name="Soler-Mira A."/>
            <person name="Urrestarazu L.A."/>
            <person name="Verhasselt P."/>
            <person name="Vissers S."/>
            <person name="Voet M."/>
            <person name="Volckaert G."/>
            <person name="Wagner G."/>
            <person name="Wambutt R."/>
            <person name="Wedler E."/>
            <person name="Wedler H."/>
            <person name="Woelfl S."/>
            <person name="Harris D.E."/>
            <person name="Bowman S."/>
            <person name="Brown D."/>
            <person name="Churcher C.M."/>
            <person name="Connor R."/>
            <person name="Dedman K."/>
            <person name="Gentles S."/>
            <person name="Hamlin N."/>
            <person name="Hunt S."/>
            <person name="Jones L."/>
            <person name="McDonald S."/>
            <person name="Murphy L.D."/>
            <person name="Niblett D."/>
            <person name="Odell C."/>
            <person name="Oliver K."/>
            <person name="Rajandream M.A."/>
            <person name="Richards C."/>
            <person name="Shore L."/>
            <person name="Walsh S.V."/>
            <person name="Barrell B.G."/>
            <person name="Dietrich F.S."/>
            <person name="Mulligan J.T."/>
            <person name="Allen E."/>
            <person name="Araujo R."/>
            <person name="Aviles E."/>
            <person name="Berno A."/>
            <person name="Carpenter J."/>
            <person name="Chen E."/>
            <person name="Cherry J.M."/>
            <person name="Chung E."/>
            <person name="Duncan M."/>
            <person name="Hunicke-Smith S."/>
            <person name="Hyman R.W."/>
            <person name="Komp C."/>
            <person name="Lashkari D."/>
            <person name="Lew H."/>
            <person name="Lin D."/>
            <person name="Mosedale D."/>
            <person name="Nakahara K."/>
            <person name="Namath A."/>
            <person name="Oefner P."/>
            <person name="Oh C."/>
            <person name="Petel F.X."/>
            <person name="Roberts D."/>
            <person name="Schramm S."/>
            <person name="Schroeder M."/>
            <person name="Shogren T."/>
            <person name="Shroff N."/>
            <person name="Winant A."/>
            <person name="Yelton M.A."/>
            <person name="Botstein D."/>
            <person name="Davis R.W."/>
            <person name="Johnston M."/>
            <person name="Andrews S."/>
            <person name="Brinkman R."/>
            <person name="Cooper J."/>
            <person name="Ding H."/>
            <person name="Du Z."/>
            <person name="Favello A."/>
            <person name="Fulton L."/>
            <person name="Gattung S."/>
            <person name="Greco T."/>
            <person name="Hallsworth K."/>
            <person name="Hawkins J."/>
            <person name="Hillier L.W."/>
            <person name="Jier M."/>
            <person name="Johnson D."/>
            <person name="Johnston L."/>
            <person name="Kirsten J."/>
            <person name="Kucaba T."/>
            <person name="Langston Y."/>
            <person name="Latreille P."/>
            <person name="Le T."/>
            <person name="Mardis E."/>
            <person name="Menezes S."/>
            <person name="Miller N."/>
            <person name="Nhan M."/>
            <person name="Pauley A."/>
            <person name="Peluso D."/>
            <person name="Rifkin L."/>
            <person name="Riles L."/>
            <person name="Taich A."/>
            <person name="Trevaskis E."/>
            <person name="Vignati D."/>
            <person name="Wilcox L."/>
            <person name="Wohldman P."/>
            <person name="Vaudin M."/>
            <person name="Wilson R."/>
            <person name="Waterston R."/>
            <person name="Albermann K."/>
            <person name="Hani J."/>
            <person name="Heumann K."/>
            <person name="Kleine K."/>
            <person name="Mewes H.-W."/>
            <person name="Zollner A."/>
            <person name="Zaccaria P."/>
        </authorList>
    </citation>
    <scope>NUCLEOTIDE SEQUENCE [LARGE SCALE GENOMIC DNA]</scope>
    <source>
        <strain>ATCC 204508 / S288c</strain>
    </source>
</reference>
<reference key="4">
    <citation type="journal article" date="2014" name="G3 (Bethesda)">
        <title>The reference genome sequence of Saccharomyces cerevisiae: Then and now.</title>
        <authorList>
            <person name="Engel S.R."/>
            <person name="Dietrich F.S."/>
            <person name="Fisk D.G."/>
            <person name="Binkley G."/>
            <person name="Balakrishnan R."/>
            <person name="Costanzo M.C."/>
            <person name="Dwight S.S."/>
            <person name="Hitz B.C."/>
            <person name="Karra K."/>
            <person name="Nash R.S."/>
            <person name="Weng S."/>
            <person name="Wong E.D."/>
            <person name="Lloyd P."/>
            <person name="Skrzypek M.S."/>
            <person name="Miyasato S.R."/>
            <person name="Simison M."/>
            <person name="Cherry J.M."/>
        </authorList>
    </citation>
    <scope>GENOME REANNOTATION</scope>
    <source>
        <strain>ATCC 204508 / S288c</strain>
    </source>
</reference>
<reference key="5">
    <citation type="journal article" date="2003" name="Nature">
        <title>Global analysis of protein expression in yeast.</title>
        <authorList>
            <person name="Ghaemmaghami S."/>
            <person name="Huh W.-K."/>
            <person name="Bower K."/>
            <person name="Howson R.W."/>
            <person name="Belle A."/>
            <person name="Dephoure N."/>
            <person name="O'Shea E.K."/>
            <person name="Weissman J.S."/>
        </authorList>
    </citation>
    <scope>LEVEL OF PROTEIN EXPRESSION [LARGE SCALE ANALYSIS]</scope>
</reference>
<reference key="6">
    <citation type="journal article" date="2005" name="Mol. Cell. Proteomics">
        <title>Quantitative phosphoproteomics applied to the yeast pheromone signaling pathway.</title>
        <authorList>
            <person name="Gruhler A."/>
            <person name="Olsen J.V."/>
            <person name="Mohammed S."/>
            <person name="Mortensen P."/>
            <person name="Faergeman N.J."/>
            <person name="Mann M."/>
            <person name="Jensen O.N."/>
        </authorList>
    </citation>
    <scope>PHOSPHORYLATION [LARGE SCALE ANALYSIS] AT SER-183</scope>
    <scope>IDENTIFICATION BY MASS SPECTROMETRY [LARGE SCALE ANALYSIS]</scope>
    <source>
        <strain>YAL6B</strain>
    </source>
</reference>
<reference key="7">
    <citation type="journal article" date="2007" name="J. Proteome Res.">
        <title>Large-scale phosphorylation analysis of alpha-factor-arrested Saccharomyces cerevisiae.</title>
        <authorList>
            <person name="Li X."/>
            <person name="Gerber S.A."/>
            <person name="Rudner A.D."/>
            <person name="Beausoleil S.A."/>
            <person name="Haas W."/>
            <person name="Villen J."/>
            <person name="Elias J.E."/>
            <person name="Gygi S.P."/>
        </authorList>
    </citation>
    <scope>PHOSPHORYLATION [LARGE SCALE ANALYSIS] AT SER-164 AND SER-492</scope>
    <scope>IDENTIFICATION BY MASS SPECTROMETRY [LARGE SCALE ANALYSIS]</scope>
    <source>
        <strain>ADR376</strain>
    </source>
</reference>
<reference key="8">
    <citation type="journal article" date="2007" name="Proc. Natl. Acad. Sci. U.S.A.">
        <title>Analysis of phosphorylation sites on proteins from Saccharomyces cerevisiae by electron transfer dissociation (ETD) mass spectrometry.</title>
        <authorList>
            <person name="Chi A."/>
            <person name="Huttenhower C."/>
            <person name="Geer L.Y."/>
            <person name="Coon J.J."/>
            <person name="Syka J.E.P."/>
            <person name="Bai D.L."/>
            <person name="Shabanowitz J."/>
            <person name="Burke D.J."/>
            <person name="Troyanskaya O.G."/>
            <person name="Hunt D.F."/>
        </authorList>
    </citation>
    <scope>IDENTIFICATION BY MASS SPECTROMETRY [LARGE SCALE ANALYSIS]</scope>
</reference>
<reference key="9">
    <citation type="journal article" date="2008" name="Mol. Cell. Proteomics">
        <title>A multidimensional chromatography technology for in-depth phosphoproteome analysis.</title>
        <authorList>
            <person name="Albuquerque C.P."/>
            <person name="Smolka M.B."/>
            <person name="Payne S.H."/>
            <person name="Bafna V."/>
            <person name="Eng J."/>
            <person name="Zhou H."/>
        </authorList>
    </citation>
    <scope>PHOSPHORYLATION [LARGE SCALE ANALYSIS] AT SER-286; SER-491 AND TYR-688</scope>
    <scope>IDENTIFICATION BY MASS SPECTROMETRY [LARGE SCALE ANALYSIS]</scope>
</reference>
<reference key="10">
    <citation type="journal article" date="2009" name="Science">
        <title>Global analysis of Cdk1 substrate phosphorylation sites provides insights into evolution.</title>
        <authorList>
            <person name="Holt L.J."/>
            <person name="Tuch B.B."/>
            <person name="Villen J."/>
            <person name="Johnson A.D."/>
            <person name="Gygi S.P."/>
            <person name="Morgan D.O."/>
        </authorList>
    </citation>
    <scope>PHOSPHORYLATION [LARGE SCALE ANALYSIS] AT SER-40; SER-164; THR-227; SER-286; SER-322; SER-492 AND TYR-688</scope>
    <scope>IDENTIFICATION BY MASS SPECTROMETRY [LARGE SCALE ANALYSIS]</scope>
</reference>
<reference key="11">
    <citation type="journal article" date="2012" name="Proc. Natl. Acad. Sci. U.S.A.">
        <title>N-terminal acetylome analyses and functional insights of the N-terminal acetyltransferase NatB.</title>
        <authorList>
            <person name="Van Damme P."/>
            <person name="Lasa M."/>
            <person name="Polevoda B."/>
            <person name="Gazquez C."/>
            <person name="Elosegui-Artola A."/>
            <person name="Kim D.S."/>
            <person name="De Juan-Pardo E."/>
            <person name="Demeyer K."/>
            <person name="Hole K."/>
            <person name="Larrea E."/>
            <person name="Timmerman E."/>
            <person name="Prieto J."/>
            <person name="Arnesen T."/>
            <person name="Sherman F."/>
            <person name="Gevaert K."/>
            <person name="Aldabe R."/>
        </authorList>
    </citation>
    <scope>ACETYLATION [LARGE SCALE ANALYSIS] AT SER-2</scope>
    <scope>CLEAVAGE OF INITIATOR METHIONINE [LARGE SCALE ANALYSIS]</scope>
    <scope>IDENTIFICATION BY MASS SPECTROMETRY [LARGE SCALE ANALYSIS]</scope>
</reference>
<organism>
    <name type="scientific">Saccharomyces cerevisiae (strain ATCC 204508 / S288c)</name>
    <name type="common">Baker's yeast</name>
    <dbReference type="NCBI Taxonomy" id="559292"/>
    <lineage>
        <taxon>Eukaryota</taxon>
        <taxon>Fungi</taxon>
        <taxon>Dikarya</taxon>
        <taxon>Ascomycota</taxon>
        <taxon>Saccharomycotina</taxon>
        <taxon>Saccharomycetes</taxon>
        <taxon>Saccharomycetales</taxon>
        <taxon>Saccharomycetaceae</taxon>
        <taxon>Saccharomyces</taxon>
    </lineage>
</organism>
<sequence>MSKNSNVNNNRSQEPNNMFVQTTGGGKNAPKQIHVAHRRSQSELTNLMIEQFTLQKQLEQVQAQQQQLMAQQQQLAQQTGQYLSGNSGSNNHFTPQPPHPHYNSNGNSPGMSAGGSRSRTHSRNNSGYYHNSYDNNNNSNNPGSNSHRKTSSQSSIYGHSRRHSLGLNEAKKAAAEEQAKRISGGEAGVTVKIDSVQADSGSNSTTEQSDFKFPPPPNAHQGHRRATSNLSPPSFKFPPNSHGDNDDEFIATSSTHRRSKTRNNEYSPGINSNWRNQSQQPQQQLSPFRHRGSNSRDYNSFNTLEPPAIFQQGHKHRASNSSVHSFSSQGNNNGGGRKSLFAPYLPQANIPELIQEGRLVAGILRVNKKNRSDAWVSTDGALDADIYICGSKDRNRALEGDLVAVELLVVDDVWESKKEKEEKKRRKDASMQHDLIPLNSSDDYHNDASVTAATSNNFLSSPSSSDSLSKDDLSVRRKRSSTINNDSDSLSSPTKSGVRRRSSLKQRPTQKKNDDVEVEGQSLLLVEEEEINDKYKPLYAGHVVAVLDRIPGQLFSGTLGLLRPSQQANSDNNKPPQSPKIAWFKPTDKKVPLIAIPTELAPKDFVENADKYSEKLFVASIKRWPITSLHPFGILVSELGDIHDPDTEIDSILRDNNFLSNEYLDQKNPQKEKPSFQPLPLTAESLEYRRNFTDTNEYNIFAISELGWVSEFALHVRNNGNGTLELGCHVVDVTSHIEEGSSVDRRARKRSSAVFMPQKLVNLLPQSFNDELSLAPGKESATLSVVYTLDSSTLRIKSTWVGESTISPSNILSLEQLDEKLSTGSPTSYLSTVQEIARSFYARRINDPEATLLPTLSLLESLDDEKVKVDLNILDRTLGFVVINEIKRKVNSTVAEKIYTKLGDLALLRRQMQPIATKMASFRKKIQNFGYNFDTNTADELIKGVLKIKDDDVRVGIEILLFKTMPRARYFIAGKVDPDQYGHYALNLPIYTHFTAPMRRYADHVVHRQLKAVIHDTPYTEDMEALKITSEYCNFKKDCAYQAQEQAIHLLLCKTINDMGNTTGQLLTMATVLQVYESSFDVFIPEFGIEKRVHGDQLPLIKAEFDGTNRVLELHWQPGVDSATFIPADEKNPKSYRNSIKNKFRSTAAEIANIELDKEAESEPLISDPLSKELSDLHLTVPNLRLPSASDNKQNALEKFISTTETRIENDNYIQEIHELQKIPILLRAEVGMALPCLTVRALNPFMKRV</sequence>
<keyword id="KW-0002">3D-structure</keyword>
<keyword id="KW-0007">Acetylation</keyword>
<keyword id="KW-0131">Cell cycle</keyword>
<keyword id="KW-0132">Cell division</keyword>
<keyword id="KW-0498">Mitosis</keyword>
<keyword id="KW-0597">Phosphoprotein</keyword>
<keyword id="KW-1185">Reference proteome</keyword>
<name>SSD1_YEAST</name>
<evidence type="ECO:0000255" key="1"/>
<evidence type="ECO:0000256" key="2">
    <source>
        <dbReference type="SAM" id="MobiDB-lite"/>
    </source>
</evidence>
<evidence type="ECO:0000269" key="3">
    <source>
    </source>
</evidence>
<evidence type="ECO:0000305" key="4"/>
<evidence type="ECO:0007744" key="5">
    <source>
    </source>
</evidence>
<evidence type="ECO:0007744" key="6">
    <source>
    </source>
</evidence>
<evidence type="ECO:0007744" key="7">
    <source>
    </source>
</evidence>
<evidence type="ECO:0007744" key="8">
    <source>
    </source>
</evidence>
<evidence type="ECO:0007744" key="9">
    <source>
    </source>
</evidence>
<evidence type="ECO:0007829" key="10">
    <source>
        <dbReference type="PDB" id="7AM1"/>
    </source>
</evidence>
<proteinExistence type="evidence at protein level"/>
<feature type="initiator methionine" description="Removed" evidence="9">
    <location>
        <position position="1"/>
    </location>
</feature>
<feature type="chain" id="PRO_0000166424" description="Protein SSD1">
    <location>
        <begin position="2"/>
        <end position="1250"/>
    </location>
</feature>
<feature type="domain" description="CSD2" evidence="1">
    <location>
        <begin position="582"/>
        <end position="657"/>
    </location>
</feature>
<feature type="domain" description="RNB" evidence="1">
    <location>
        <begin position="694"/>
        <end position="1015"/>
    </location>
</feature>
<feature type="domain" description="DIS3L2 C-terminal" evidence="1">
    <location>
        <begin position="1064"/>
        <end position="1148"/>
    </location>
</feature>
<feature type="region of interest" description="Disordered" evidence="2">
    <location>
        <begin position="1"/>
        <end position="32"/>
    </location>
</feature>
<feature type="region of interest" description="Disordered" evidence="2">
    <location>
        <begin position="79"/>
        <end position="163"/>
    </location>
</feature>
<feature type="region of interest" description="Disordered" evidence="2">
    <location>
        <begin position="197"/>
        <end position="338"/>
    </location>
</feature>
<feature type="region of interest" description="Disordered" evidence="2">
    <location>
        <begin position="418"/>
        <end position="443"/>
    </location>
</feature>
<feature type="region of interest" description="Disordered" evidence="2">
    <location>
        <begin position="455"/>
        <end position="517"/>
    </location>
</feature>
<feature type="compositionally biased region" description="Polar residues" evidence="2">
    <location>
        <begin position="1"/>
        <end position="22"/>
    </location>
</feature>
<feature type="compositionally biased region" description="Polar residues" evidence="2">
    <location>
        <begin position="84"/>
        <end position="94"/>
    </location>
</feature>
<feature type="compositionally biased region" description="Low complexity" evidence="2">
    <location>
        <begin position="124"/>
        <end position="145"/>
    </location>
</feature>
<feature type="compositionally biased region" description="Polar residues" evidence="2">
    <location>
        <begin position="197"/>
        <end position="208"/>
    </location>
</feature>
<feature type="compositionally biased region" description="Polar residues" evidence="2">
    <location>
        <begin position="264"/>
        <end position="276"/>
    </location>
</feature>
<feature type="compositionally biased region" description="Low complexity" evidence="2">
    <location>
        <begin position="277"/>
        <end position="287"/>
    </location>
</feature>
<feature type="compositionally biased region" description="Polar residues" evidence="2">
    <location>
        <begin position="319"/>
        <end position="329"/>
    </location>
</feature>
<feature type="compositionally biased region" description="Polar residues" evidence="2">
    <location>
        <begin position="481"/>
        <end position="495"/>
    </location>
</feature>
<feature type="compositionally biased region" description="Basic residues" evidence="2">
    <location>
        <begin position="497"/>
        <end position="510"/>
    </location>
</feature>
<feature type="modified residue" description="N-acetylserine" evidence="9">
    <location>
        <position position="2"/>
    </location>
</feature>
<feature type="modified residue" description="Phosphoserine" evidence="8">
    <location>
        <position position="40"/>
    </location>
</feature>
<feature type="modified residue" description="Phosphoserine" evidence="6 8">
    <location>
        <position position="164"/>
    </location>
</feature>
<feature type="modified residue" description="Phosphoserine" evidence="5">
    <location>
        <position position="183"/>
    </location>
</feature>
<feature type="modified residue" description="Phosphothreonine" evidence="8">
    <location>
        <position position="227"/>
    </location>
</feature>
<feature type="modified residue" description="Phosphoserine" evidence="7 8">
    <location>
        <position position="286"/>
    </location>
</feature>
<feature type="modified residue" description="Phosphoserine" evidence="8">
    <location>
        <position position="322"/>
    </location>
</feature>
<feature type="modified residue" description="Phosphoserine" evidence="7">
    <location>
        <position position="491"/>
    </location>
</feature>
<feature type="modified residue" description="Phosphoserine" evidence="6 8">
    <location>
        <position position="492"/>
    </location>
</feature>
<feature type="modified residue" description="Phosphotyrosine" evidence="7 8">
    <location>
        <position position="688"/>
    </location>
</feature>
<feature type="helix" evidence="10">
    <location>
        <begin position="347"/>
        <end position="349"/>
    </location>
</feature>
<feature type="helix" evidence="10">
    <location>
        <begin position="350"/>
        <end position="355"/>
    </location>
</feature>
<feature type="strand" evidence="10">
    <location>
        <begin position="360"/>
        <end position="366"/>
    </location>
</feature>
<feature type="strand" evidence="10">
    <location>
        <begin position="368"/>
        <end position="370"/>
    </location>
</feature>
<feature type="strand" evidence="10">
    <location>
        <begin position="373"/>
        <end position="377"/>
    </location>
</feature>
<feature type="strand" evidence="10">
    <location>
        <begin position="379"/>
        <end position="384"/>
    </location>
</feature>
<feature type="strand" evidence="10">
    <location>
        <begin position="386"/>
        <end position="389"/>
    </location>
</feature>
<feature type="helix" evidence="10">
    <location>
        <begin position="390"/>
        <end position="394"/>
    </location>
</feature>
<feature type="strand" evidence="10">
    <location>
        <begin position="402"/>
        <end position="407"/>
    </location>
</feature>
<feature type="helix" evidence="10">
    <location>
        <begin position="410"/>
        <end position="413"/>
    </location>
</feature>
<feature type="strand" evidence="10">
    <location>
        <begin position="500"/>
        <end position="502"/>
    </location>
</feature>
<feature type="helix" evidence="10">
    <location>
        <begin position="509"/>
        <end position="520"/>
    </location>
</feature>
<feature type="strand" evidence="10">
    <location>
        <begin position="522"/>
        <end position="524"/>
    </location>
</feature>
<feature type="strand" evidence="10">
    <location>
        <begin position="540"/>
        <end position="548"/>
    </location>
</feature>
<feature type="strand" evidence="10">
    <location>
        <begin position="555"/>
        <end position="560"/>
    </location>
</feature>
<feature type="strand" evidence="10">
    <location>
        <begin position="581"/>
        <end position="588"/>
    </location>
</feature>
<feature type="strand" evidence="10">
    <location>
        <begin position="594"/>
        <end position="597"/>
    </location>
</feature>
<feature type="turn" evidence="10">
    <location>
        <begin position="598"/>
        <end position="600"/>
    </location>
</feature>
<feature type="helix" evidence="10">
    <location>
        <begin position="603"/>
        <end position="605"/>
    </location>
</feature>
<feature type="helix" evidence="10">
    <location>
        <begin position="609"/>
        <end position="612"/>
    </location>
</feature>
<feature type="strand" evidence="10">
    <location>
        <begin position="615"/>
        <end position="623"/>
    </location>
</feature>
<feature type="strand" evidence="10">
    <location>
        <begin position="632"/>
        <end position="641"/>
    </location>
</feature>
<feature type="helix" evidence="10">
    <location>
        <begin position="645"/>
        <end position="655"/>
    </location>
</feature>
<feature type="strand" evidence="10">
    <location>
        <begin position="669"/>
        <end position="672"/>
    </location>
</feature>
<feature type="helix" evidence="10">
    <location>
        <begin position="683"/>
        <end position="688"/>
    </location>
</feature>
<feature type="strand" evidence="10">
    <location>
        <begin position="689"/>
        <end position="692"/>
    </location>
</feature>
<feature type="turn" evidence="10">
    <location>
        <begin position="695"/>
        <end position="697"/>
    </location>
</feature>
<feature type="strand" evidence="10">
    <location>
        <begin position="701"/>
        <end position="704"/>
    </location>
</feature>
<feature type="strand" evidence="10">
    <location>
        <begin position="712"/>
        <end position="718"/>
    </location>
</feature>
<feature type="strand" evidence="10">
    <location>
        <begin position="720"/>
        <end position="731"/>
    </location>
</feature>
<feature type="helix" evidence="10">
    <location>
        <begin position="733"/>
        <end position="736"/>
    </location>
</feature>
<feature type="helix" evidence="10">
    <location>
        <begin position="742"/>
        <end position="750"/>
    </location>
</feature>
<feature type="helix" evidence="10">
    <location>
        <begin position="766"/>
        <end position="772"/>
    </location>
</feature>
<feature type="strand" evidence="10">
    <location>
        <begin position="780"/>
        <end position="790"/>
    </location>
</feature>
<feature type="turn" evidence="10">
    <location>
        <begin position="791"/>
        <end position="793"/>
    </location>
</feature>
<feature type="strand" evidence="10">
    <location>
        <begin position="796"/>
        <end position="806"/>
    </location>
</feature>
<feature type="strand" evidence="10">
    <location>
        <begin position="809"/>
        <end position="813"/>
    </location>
</feature>
<feature type="helix" evidence="10">
    <location>
        <begin position="814"/>
        <end position="822"/>
    </location>
</feature>
<feature type="helix" evidence="10">
    <location>
        <begin position="829"/>
        <end position="844"/>
    </location>
</feature>
<feature type="helix" evidence="10">
    <location>
        <begin position="857"/>
        <end position="863"/>
    </location>
</feature>
<feature type="helix" evidence="10">
    <location>
        <begin position="878"/>
        <end position="902"/>
    </location>
</feature>
<feature type="helix" evidence="10">
    <location>
        <begin position="903"/>
        <end position="905"/>
    </location>
</feature>
<feature type="strand" evidence="10">
    <location>
        <begin position="907"/>
        <end position="911"/>
    </location>
</feature>
<feature type="helix" evidence="10">
    <location>
        <begin position="916"/>
        <end position="929"/>
    </location>
</feature>
<feature type="helix" evidence="10">
    <location>
        <begin position="938"/>
        <end position="946"/>
    </location>
</feature>
<feature type="helix" evidence="10">
    <location>
        <begin position="951"/>
        <end position="963"/>
    </location>
</feature>
<feature type="strand" evidence="10">
    <location>
        <begin position="969"/>
        <end position="972"/>
    </location>
</feature>
<feature type="helix" evidence="10">
    <location>
        <begin position="973"/>
        <end position="975"/>
    </location>
</feature>
<feature type="helix" evidence="10">
    <location>
        <begin position="978"/>
        <end position="980"/>
    </location>
</feature>
<feature type="turn" evidence="10">
    <location>
        <begin position="984"/>
        <end position="987"/>
    </location>
</feature>
<feature type="strand" evidence="10">
    <location>
        <begin position="988"/>
        <end position="990"/>
    </location>
</feature>
<feature type="turn" evidence="10">
    <location>
        <begin position="997"/>
        <end position="999"/>
    </location>
</feature>
<feature type="helix" evidence="10">
    <location>
        <begin position="1002"/>
        <end position="1015"/>
    </location>
</feature>
<feature type="helix" evidence="10">
    <location>
        <begin position="1023"/>
        <end position="1059"/>
    </location>
</feature>
<feature type="turn" evidence="10">
    <location>
        <begin position="1060"/>
        <end position="1063"/>
    </location>
</feature>
<feature type="strand" evidence="10">
    <location>
        <begin position="1064"/>
        <end position="1075"/>
    </location>
</feature>
<feature type="strand" evidence="10">
    <location>
        <begin position="1077"/>
        <end position="1083"/>
    </location>
</feature>
<feature type="turn" evidence="10">
    <location>
        <begin position="1085"/>
        <end position="1087"/>
    </location>
</feature>
<feature type="strand" evidence="10">
    <location>
        <begin position="1090"/>
        <end position="1094"/>
    </location>
</feature>
<feature type="helix" evidence="10">
    <location>
        <begin position="1095"/>
        <end position="1097"/>
    </location>
</feature>
<feature type="strand" evidence="10">
    <location>
        <begin position="1100"/>
        <end position="1106"/>
    </location>
</feature>
<feature type="turn" evidence="10">
    <location>
        <begin position="1107"/>
        <end position="1110"/>
    </location>
</feature>
<feature type="strand" evidence="10">
    <location>
        <begin position="1111"/>
        <end position="1116"/>
    </location>
</feature>
<feature type="turn" evidence="10">
    <location>
        <begin position="1122"/>
        <end position="1124"/>
    </location>
</feature>
<feature type="helix" evidence="10">
    <location>
        <begin position="1128"/>
        <end position="1130"/>
    </location>
</feature>
<feature type="helix" evidence="10">
    <location>
        <begin position="1136"/>
        <end position="1139"/>
    </location>
</feature>
<feature type="helix" evidence="10">
    <location>
        <begin position="1148"/>
        <end position="1161"/>
    </location>
</feature>
<feature type="helix" evidence="10">
    <location>
        <begin position="1168"/>
        <end position="1176"/>
    </location>
</feature>
<feature type="helix" evidence="10">
    <location>
        <begin position="1196"/>
        <end position="1201"/>
    </location>
</feature>
<feature type="strand" evidence="10">
    <location>
        <begin position="1206"/>
        <end position="1209"/>
    </location>
</feature>
<feature type="strand" evidence="10">
    <location>
        <begin position="1212"/>
        <end position="1218"/>
    </location>
</feature>
<feature type="strand" evidence="10">
    <location>
        <begin position="1222"/>
        <end position="1230"/>
    </location>
</feature>
<feature type="strand" evidence="10">
    <location>
        <begin position="1232"/>
        <end position="1235"/>
    </location>
</feature>
<feature type="strand" evidence="10">
    <location>
        <begin position="1237"/>
        <end position="1242"/>
    </location>
</feature>